<reference key="1">
    <citation type="journal article" date="1995" name="Eur. J. Biochem.">
        <title>The phosphoglycerate kinase and glyceraldehyde-3-phosphate dehydrogenase genes from the thermophilic archaeon Sulfolobus solfataricus overlap by 8-bp. Isolation, sequencing of the genes and expression in Escherichia coli.</title>
        <authorList>
            <person name="Jones C.E."/>
            <person name="Fleming T.M."/>
            <person name="Cowan D.A."/>
            <person name="Littlechild J.A."/>
            <person name="Piper P.W."/>
        </authorList>
    </citation>
    <scope>NUCLEOTIDE SEQUENCE [GENOMIC DNA]</scope>
</reference>
<reference key="2">
    <citation type="journal article" date="2000" name="Genome">
        <title>Gene content and organization of a 281-kbp contig from the genome of the extremely thermophilic archaeon, Sulfolobus solfataricus P2.</title>
        <authorList>
            <person name="Charlebois R.L."/>
            <person name="Singh R.K."/>
            <person name="Chan-Weiher C.C.-Y."/>
            <person name="Allard G."/>
            <person name="Chow C."/>
            <person name="Confalonieri F."/>
            <person name="Curtis B."/>
            <person name="Duguet M."/>
            <person name="Erauso G."/>
            <person name="Faguy D."/>
            <person name="Gaasterland T."/>
            <person name="Garrett R.A."/>
            <person name="Gordon P."/>
            <person name="Jeffries A.C."/>
            <person name="Kozera C."/>
            <person name="Kushwaha N."/>
            <person name="Lafleur E."/>
            <person name="Medina N."/>
            <person name="Peng X."/>
            <person name="Penny S.L."/>
            <person name="She Q."/>
            <person name="St Jean A."/>
            <person name="van der Oost J."/>
            <person name="Young F."/>
            <person name="Zivanovic Y."/>
            <person name="Doolittle W.F."/>
            <person name="Ragan M.A."/>
            <person name="Sensen C.W."/>
        </authorList>
    </citation>
    <scope>NUCLEOTIDE SEQUENCE [LARGE SCALE GENOMIC DNA]</scope>
    <source>
        <strain>ATCC 35092 / DSM 1617 / JCM 11322 / P2</strain>
    </source>
</reference>
<reference key="3">
    <citation type="journal article" date="2001" name="Proc. Natl. Acad. Sci. U.S.A.">
        <title>The complete genome of the crenarchaeon Sulfolobus solfataricus P2.</title>
        <authorList>
            <person name="She Q."/>
            <person name="Singh R.K."/>
            <person name="Confalonieri F."/>
            <person name="Zivanovic Y."/>
            <person name="Allard G."/>
            <person name="Awayez M.J."/>
            <person name="Chan-Weiher C.C.-Y."/>
            <person name="Clausen I.G."/>
            <person name="Curtis B.A."/>
            <person name="De Moors A."/>
            <person name="Erauso G."/>
            <person name="Fletcher C."/>
            <person name="Gordon P.M.K."/>
            <person name="Heikamp-de Jong I."/>
            <person name="Jeffries A.C."/>
            <person name="Kozera C.J."/>
            <person name="Medina N."/>
            <person name="Peng X."/>
            <person name="Thi-Ngoc H.P."/>
            <person name="Redder P."/>
            <person name="Schenk M.E."/>
            <person name="Theriault C."/>
            <person name="Tolstrup N."/>
            <person name="Charlebois R.L."/>
            <person name="Doolittle W.F."/>
            <person name="Duguet M."/>
            <person name="Gaasterland T."/>
            <person name="Garrett R.A."/>
            <person name="Ragan M.A."/>
            <person name="Sensen C.W."/>
            <person name="Van der Oost J."/>
        </authorList>
    </citation>
    <scope>NUCLEOTIDE SEQUENCE [LARGE SCALE GENOMIC DNA]</scope>
    <source>
        <strain>ATCC 35092 / DSM 1617 / JCM 11322 / P2</strain>
    </source>
</reference>
<accession>P50317</accession>
<accession>Q9UWT3</accession>
<name>PGK_SACS2</name>
<comment type="catalytic activity">
    <reaction>
        <text>(2R)-3-phosphoglycerate + ATP = (2R)-3-phospho-glyceroyl phosphate + ADP</text>
        <dbReference type="Rhea" id="RHEA:14801"/>
        <dbReference type="ChEBI" id="CHEBI:30616"/>
        <dbReference type="ChEBI" id="CHEBI:57604"/>
        <dbReference type="ChEBI" id="CHEBI:58272"/>
        <dbReference type="ChEBI" id="CHEBI:456216"/>
        <dbReference type="EC" id="2.7.2.3"/>
    </reaction>
</comment>
<comment type="pathway">
    <text>Carbohydrate degradation; glycolysis; pyruvate from D-glyceraldehyde 3-phosphate: step 2/5.</text>
</comment>
<comment type="subcellular location">
    <subcellularLocation>
        <location>Cytoplasm</location>
    </subcellularLocation>
</comment>
<comment type="similarity">
    <text evidence="2">Belongs to the phosphoglycerate kinase family.</text>
</comment>
<comment type="sequence caution" evidence="2">
    <conflict type="erroneous initiation">
        <sequence resource="EMBL-CDS" id="AAK40847"/>
    </conflict>
</comment>
<comment type="sequence caution" evidence="2">
    <conflict type="erroneous initiation">
        <sequence resource="EMBL-CDS" id="CAB57772"/>
    </conflict>
</comment>
<evidence type="ECO:0000250" key="1"/>
<evidence type="ECO:0000305" key="2"/>
<sequence>MGDLTIPTMDDIDIQSKKVLLRIDINSPVDENGKIIDDSRIKAHIGTIKELINKGNSVVLISHQGRPGDKDFTSLEEHAKLISKYLDREVIFVDDVIGPYAREMIKKLENNGILLLDNIRLISEELIEAPPQQHVKSFLVKKLAPLFDIYINDAFATAHRSQPSIVGFPLALPSAAGRVMEREVSALAKIFNAEDTPKIFTLGGGKVHDTIRIIENLVRKRIADRILTGGLVAELFSVAKGMNLNPKNMEILEKLGILSLIPRARKLLLSGAPIEIPVDYKVEINGNVIEEPASKVTGIIKDIGSTTAEIYSSFIKDAKVVVLRGPMGVIEDERFKSGSKSVLKASLEGQGYVIIGGGHMISALDEDMKIDSSKVHISTGGGALLLFLSGERLPALEALSMSVVNSGD</sequence>
<keyword id="KW-0067">ATP-binding</keyword>
<keyword id="KW-0963">Cytoplasm</keyword>
<keyword id="KW-0324">Glycolysis</keyword>
<keyword id="KW-0418">Kinase</keyword>
<keyword id="KW-0547">Nucleotide-binding</keyword>
<keyword id="KW-1185">Reference proteome</keyword>
<keyword id="KW-0808">Transferase</keyword>
<organism>
    <name type="scientific">Saccharolobus solfataricus (strain ATCC 35092 / DSM 1617 / JCM 11322 / P2)</name>
    <name type="common">Sulfolobus solfataricus</name>
    <dbReference type="NCBI Taxonomy" id="273057"/>
    <lineage>
        <taxon>Archaea</taxon>
        <taxon>Thermoproteota</taxon>
        <taxon>Thermoprotei</taxon>
        <taxon>Sulfolobales</taxon>
        <taxon>Sulfolobaceae</taxon>
        <taxon>Saccharolobus</taxon>
    </lineage>
</organism>
<gene>
    <name type="primary">pgk</name>
    <name type="ordered locus">SSO0527</name>
    <name type="ORF">C22_024</name>
</gene>
<protein>
    <recommendedName>
        <fullName>Phosphoglycerate kinase</fullName>
        <ecNumber>2.7.2.3</ecNumber>
    </recommendedName>
</protein>
<proteinExistence type="inferred from homology"/>
<feature type="chain" id="PRO_0000146071" description="Phosphoglycerate kinase">
    <location>
        <begin position="1"/>
        <end position="408"/>
    </location>
</feature>
<feature type="binding site" evidence="1">
    <location>
        <begin position="24"/>
        <end position="26"/>
    </location>
    <ligand>
        <name>substrate</name>
    </ligand>
</feature>
<feature type="binding site" evidence="1">
    <location>
        <position position="40"/>
    </location>
    <ligand>
        <name>substrate</name>
    </ligand>
</feature>
<feature type="binding site" evidence="1">
    <location>
        <begin position="63"/>
        <end position="66"/>
    </location>
    <ligand>
        <name>substrate</name>
    </ligand>
</feature>
<feature type="binding site" evidence="1">
    <location>
        <position position="120"/>
    </location>
    <ligand>
        <name>substrate</name>
    </ligand>
</feature>
<feature type="binding site" evidence="1">
    <location>
        <position position="160"/>
    </location>
    <ligand>
        <name>substrate</name>
    </ligand>
</feature>
<feature type="binding site" evidence="1">
    <location>
        <position position="331"/>
    </location>
    <ligand>
        <name>ATP</name>
        <dbReference type="ChEBI" id="CHEBI:30616"/>
    </ligand>
</feature>
<feature type="binding site" evidence="1">
    <location>
        <begin position="357"/>
        <end position="360"/>
    </location>
    <ligand>
        <name>ATP</name>
        <dbReference type="ChEBI" id="CHEBI:30616"/>
    </ligand>
</feature>
<dbReference type="EC" id="2.7.2.3"/>
<dbReference type="EMBL" id="X80178">
    <property type="protein sequence ID" value="CAA56459.1"/>
    <property type="molecule type" value="Genomic_DNA"/>
</dbReference>
<dbReference type="EMBL" id="Y18930">
    <property type="protein sequence ID" value="CAB57772.1"/>
    <property type="status" value="ALT_INIT"/>
    <property type="molecule type" value="Genomic_DNA"/>
</dbReference>
<dbReference type="EMBL" id="AE006641">
    <property type="protein sequence ID" value="AAK40847.1"/>
    <property type="status" value="ALT_INIT"/>
    <property type="molecule type" value="Genomic_DNA"/>
</dbReference>
<dbReference type="PIR" id="H90198">
    <property type="entry name" value="H90198"/>
</dbReference>
<dbReference type="PIR" id="S63528">
    <property type="entry name" value="S63528"/>
</dbReference>
<dbReference type="SMR" id="P50317"/>
<dbReference type="FunCoup" id="P50317">
    <property type="interactions" value="294"/>
</dbReference>
<dbReference type="STRING" id="273057.SSO0527"/>
<dbReference type="PaxDb" id="273057-SSO0527"/>
<dbReference type="EnsemblBacteria" id="AAK40847">
    <property type="protein sequence ID" value="AAK40847"/>
    <property type="gene ID" value="SSO0527"/>
</dbReference>
<dbReference type="KEGG" id="sso:SSO0527"/>
<dbReference type="PATRIC" id="fig|273057.12.peg.526"/>
<dbReference type="eggNOG" id="arCOG00496">
    <property type="taxonomic scope" value="Archaea"/>
</dbReference>
<dbReference type="HOGENOM" id="CLU_025427_0_2_2"/>
<dbReference type="InParanoid" id="P50317"/>
<dbReference type="PhylomeDB" id="P50317"/>
<dbReference type="BRENDA" id="2.7.2.3">
    <property type="organism ID" value="6163"/>
</dbReference>
<dbReference type="SABIO-RK" id="P50317"/>
<dbReference type="UniPathway" id="UPA00109">
    <property type="reaction ID" value="UER00185"/>
</dbReference>
<dbReference type="Proteomes" id="UP000001974">
    <property type="component" value="Chromosome"/>
</dbReference>
<dbReference type="GO" id="GO:0005829">
    <property type="term" value="C:cytosol"/>
    <property type="evidence" value="ECO:0000318"/>
    <property type="project" value="GO_Central"/>
</dbReference>
<dbReference type="GO" id="GO:0043531">
    <property type="term" value="F:ADP binding"/>
    <property type="evidence" value="ECO:0000318"/>
    <property type="project" value="GO_Central"/>
</dbReference>
<dbReference type="GO" id="GO:0005524">
    <property type="term" value="F:ATP binding"/>
    <property type="evidence" value="ECO:0000318"/>
    <property type="project" value="GO_Central"/>
</dbReference>
<dbReference type="GO" id="GO:0004618">
    <property type="term" value="F:phosphoglycerate kinase activity"/>
    <property type="evidence" value="ECO:0000318"/>
    <property type="project" value="GO_Central"/>
</dbReference>
<dbReference type="GO" id="GO:0006094">
    <property type="term" value="P:gluconeogenesis"/>
    <property type="evidence" value="ECO:0000318"/>
    <property type="project" value="GO_Central"/>
</dbReference>
<dbReference type="GO" id="GO:0006096">
    <property type="term" value="P:glycolytic process"/>
    <property type="evidence" value="ECO:0000318"/>
    <property type="project" value="GO_Central"/>
</dbReference>
<dbReference type="FunFam" id="3.40.50.1260:FF:000006">
    <property type="entry name" value="Phosphoglycerate kinase"/>
    <property type="match status" value="1"/>
</dbReference>
<dbReference type="FunFam" id="3.40.50.1260:FF:000012">
    <property type="entry name" value="Phosphoglycerate kinase"/>
    <property type="match status" value="1"/>
</dbReference>
<dbReference type="Gene3D" id="3.40.50.1260">
    <property type="entry name" value="Phosphoglycerate kinase, N-terminal domain"/>
    <property type="match status" value="2"/>
</dbReference>
<dbReference type="HAMAP" id="MF_00145">
    <property type="entry name" value="Phosphoglyc_kinase"/>
    <property type="match status" value="1"/>
</dbReference>
<dbReference type="InterPro" id="IPR001576">
    <property type="entry name" value="Phosphoglycerate_kinase"/>
</dbReference>
<dbReference type="InterPro" id="IPR015911">
    <property type="entry name" value="Phosphoglycerate_kinase_CS"/>
</dbReference>
<dbReference type="InterPro" id="IPR015824">
    <property type="entry name" value="Phosphoglycerate_kinase_N"/>
</dbReference>
<dbReference type="InterPro" id="IPR036043">
    <property type="entry name" value="Phosphoglycerate_kinase_sf"/>
</dbReference>
<dbReference type="PANTHER" id="PTHR11406">
    <property type="entry name" value="PHOSPHOGLYCERATE KINASE"/>
    <property type="match status" value="1"/>
</dbReference>
<dbReference type="PANTHER" id="PTHR11406:SF23">
    <property type="entry name" value="PHOSPHOGLYCERATE KINASE 1, CHLOROPLASTIC-RELATED"/>
    <property type="match status" value="1"/>
</dbReference>
<dbReference type="Pfam" id="PF00162">
    <property type="entry name" value="PGK"/>
    <property type="match status" value="1"/>
</dbReference>
<dbReference type="PIRSF" id="PIRSF000724">
    <property type="entry name" value="Pgk"/>
    <property type="match status" value="1"/>
</dbReference>
<dbReference type="PRINTS" id="PR00477">
    <property type="entry name" value="PHGLYCKINASE"/>
</dbReference>
<dbReference type="SUPFAM" id="SSF53748">
    <property type="entry name" value="Phosphoglycerate kinase"/>
    <property type="match status" value="1"/>
</dbReference>
<dbReference type="PROSITE" id="PS00111">
    <property type="entry name" value="PGLYCERATE_KINASE"/>
    <property type="match status" value="1"/>
</dbReference>